<name>MTRB_METTM</name>
<evidence type="ECO:0000255" key="1"/>
<evidence type="ECO:0000269" key="2">
    <source>
    </source>
</evidence>
<evidence type="ECO:0000303" key="3">
    <source>
    </source>
</evidence>
<evidence type="ECO:0000305" key="4"/>
<evidence type="ECO:0000305" key="5">
    <source>
    </source>
</evidence>
<evidence type="ECO:0000305" key="6">
    <source>
    </source>
</evidence>
<accession>Q59584</accession>
<accession>D9PY25</accession>
<organism>
    <name type="scientific">Methanothermobacter marburgensis (strain ATCC BAA-927 / DSM 2133 / JCM 14651 / NBRC 100331 / OCM 82 / Marburg)</name>
    <name type="common">Methanobacterium thermoautotrophicum</name>
    <dbReference type="NCBI Taxonomy" id="79929"/>
    <lineage>
        <taxon>Archaea</taxon>
        <taxon>Methanobacteriati</taxon>
        <taxon>Methanobacteriota</taxon>
        <taxon>Methanomada group</taxon>
        <taxon>Methanobacteria</taxon>
        <taxon>Methanobacteriales</taxon>
        <taxon>Methanobacteriaceae</taxon>
        <taxon>Methanothermobacter</taxon>
    </lineage>
</organism>
<reference key="1">
    <citation type="journal article" date="1993" name="Eur. J. Biochem.">
        <title>Cloning, sequencing and immunological characterization of the corrinoid-containing subunit of the N5-methyltetrahydromethanopterin: coenzyme-M methyltransferase from Methanobacterium thermoautotrophicum.</title>
        <authorList>
            <person name="Stupperich E."/>
            <person name="Juza A."/>
            <person name="Hoppert M."/>
            <person name="Mayer F."/>
        </authorList>
    </citation>
    <scope>NUCLEOTIDE SEQUENCE [GENOMIC DNA]</scope>
    <source>
        <strain>ATCC BAA-927 / DSM 2133 / JCM 14651 / NBRC 100331 / OCM 82 / Marburg</strain>
    </source>
</reference>
<reference key="2">
    <citation type="journal article" date="2010" name="J. Bacteriol.">
        <title>Complete genome sequence of Methanothermobacter marburgensis, a methanoarchaeon model organism.</title>
        <authorList>
            <person name="Liesegang H."/>
            <person name="Kaster A.K."/>
            <person name="Wiezer A."/>
            <person name="Goenrich M."/>
            <person name="Wollherr A."/>
            <person name="Seedorf H."/>
            <person name="Gottschalk G."/>
            <person name="Thauer R.K."/>
        </authorList>
    </citation>
    <scope>NUCLEOTIDE SEQUENCE [LARGE SCALE GENOMIC DNA]</scope>
    <source>
        <strain>ATCC BAA-927 / DSM 2133 / JCM 14651 / NBRC 100331 / OCM 82 / Marburg</strain>
    </source>
</reference>
<reference key="3">
    <citation type="journal article" date="1995" name="Eur. J. Biochem.">
        <title>The energy conserving N5-methyltetrahydromethanopterin:coenzyme M methyltransferase complex from Methanobacterium thermoautotrophicum is composed of eight different subunits.</title>
        <authorList>
            <person name="Harms U."/>
            <person name="Weiss D.S."/>
            <person name="Gaertner P."/>
            <person name="Linder D."/>
            <person name="Thauer R.K."/>
        </authorList>
    </citation>
    <scope>PROTEIN SEQUENCE OF 1-15</scope>
    <scope>FUNCTION</scope>
    <scope>SUBUNIT</scope>
    <scope>OPERON STRUCTURE</scope>
    <source>
        <strain>ATCC BAA-927 / DSM 2133 / JCM 14651 / NBRC 100331 / OCM 82 / Marburg</strain>
    </source>
</reference>
<reference key="4">
    <citation type="journal article" date="1993" name="Eur. J. Biochem.">
        <title>Purification and properties of N5-methyltetrahydromethanopterin:coenzyme M methyltransferase from Methanobacterium thermoautotrophicum.</title>
        <authorList>
            <person name="Gaertner P."/>
            <person name="Ecker A."/>
            <person name="Fischer R."/>
            <person name="Linder D."/>
            <person name="Fuchs G."/>
            <person name="Thauer R.K."/>
        </authorList>
    </citation>
    <scope>FUNCTION</scope>
    <scope>CATALYTIC ACTIVITY</scope>
    <scope>BIOPHYSICOCHEMICAL PROPERTIES</scope>
    <source>
        <strain>ATCC BAA-927 / DSM 2133 / JCM 14651 / NBRC 100331 / OCM 82 / Marburg</strain>
    </source>
</reference>
<protein>
    <recommendedName>
        <fullName>Tetrahydromethanopterin S-methyltransferase subunit B</fullName>
        <ecNumber evidence="6">7.2.1.4</ecNumber>
    </recommendedName>
    <alternativeName>
        <fullName>N5-methyltetrahydromethanopterin--coenzyme M methyltransferase subunit B</fullName>
    </alternativeName>
</protein>
<dbReference type="EC" id="7.2.1.4" evidence="6"/>
<dbReference type="EMBL" id="X73123">
    <property type="protein sequence ID" value="CAA51555.1"/>
    <property type="molecule type" value="Genomic_DNA"/>
</dbReference>
<dbReference type="EMBL" id="CP001710">
    <property type="protein sequence ID" value="ADL59123.1"/>
    <property type="molecule type" value="Genomic_DNA"/>
</dbReference>
<dbReference type="RefSeq" id="WP_013296333.1">
    <property type="nucleotide sequence ID" value="NC_014408.1"/>
</dbReference>
<dbReference type="PDB" id="8Q3V">
    <property type="method" value="EM"/>
    <property type="resolution" value="2.08 A"/>
    <property type="chains" value="B/R/b=1-100"/>
</dbReference>
<dbReference type="PDB" id="8Q54">
    <property type="method" value="EM"/>
    <property type="resolution" value="2.39 A"/>
    <property type="chains" value="B/R/b=1-100"/>
</dbReference>
<dbReference type="PDBsum" id="8Q3V"/>
<dbReference type="PDBsum" id="8Q54"/>
<dbReference type="EMDB" id="EMD-18135"/>
<dbReference type="EMDB" id="EMD-18162"/>
<dbReference type="SMR" id="Q59584"/>
<dbReference type="STRING" id="79929.MTBMA_c15440"/>
<dbReference type="TCDB" id="3.C.1.1.1">
    <property type="family name" value="the na(+) transporting methyltetrahydromethanopterin:coenzyme m methyltransferase (nat-mmm) family"/>
</dbReference>
<dbReference type="PaxDb" id="79929-MTBMA_c15440"/>
<dbReference type="GeneID" id="77400315"/>
<dbReference type="GeneID" id="9705253"/>
<dbReference type="KEGG" id="mmg:MTBMA_c15440"/>
<dbReference type="PATRIC" id="fig|79929.8.peg.1497"/>
<dbReference type="HOGENOM" id="CLU_171544_0_0_2"/>
<dbReference type="OrthoDB" id="114034at2157"/>
<dbReference type="UniPathway" id="UPA00640">
    <property type="reaction ID" value="UER00698"/>
</dbReference>
<dbReference type="Proteomes" id="UP000000345">
    <property type="component" value="Chromosome"/>
</dbReference>
<dbReference type="GO" id="GO:0034708">
    <property type="term" value="C:methyltransferase complex"/>
    <property type="evidence" value="ECO:0000314"/>
    <property type="project" value="UniProtKB"/>
</dbReference>
<dbReference type="GO" id="GO:0005886">
    <property type="term" value="C:plasma membrane"/>
    <property type="evidence" value="ECO:0007669"/>
    <property type="project" value="UniProtKB-SubCell"/>
</dbReference>
<dbReference type="GO" id="GO:0030269">
    <property type="term" value="F:tetrahydromethanopterin S-methyltransferase activity"/>
    <property type="evidence" value="ECO:0000314"/>
    <property type="project" value="MENGO"/>
</dbReference>
<dbReference type="GO" id="GO:0019386">
    <property type="term" value="P:methanogenesis, from carbon dioxide"/>
    <property type="evidence" value="ECO:0007669"/>
    <property type="project" value="UniProtKB-UniRule"/>
</dbReference>
<dbReference type="GO" id="GO:0032259">
    <property type="term" value="P:methylation"/>
    <property type="evidence" value="ECO:0007669"/>
    <property type="project" value="UniProtKB-KW"/>
</dbReference>
<dbReference type="GO" id="GO:0006730">
    <property type="term" value="P:one-carbon metabolic process"/>
    <property type="evidence" value="ECO:0007669"/>
    <property type="project" value="UniProtKB-UniRule"/>
</dbReference>
<dbReference type="HAMAP" id="MF_01094">
    <property type="entry name" value="MtrB"/>
    <property type="match status" value="1"/>
</dbReference>
<dbReference type="InterPro" id="IPR008690">
    <property type="entry name" value="MtrB_MeTrfase"/>
</dbReference>
<dbReference type="NCBIfam" id="TIGR04166">
    <property type="entry name" value="methano_MtrB"/>
    <property type="match status" value="1"/>
</dbReference>
<dbReference type="NCBIfam" id="NF002129">
    <property type="entry name" value="PRK00965.1"/>
    <property type="match status" value="1"/>
</dbReference>
<dbReference type="Pfam" id="PF05440">
    <property type="entry name" value="MtrB"/>
    <property type="match status" value="1"/>
</dbReference>
<dbReference type="PIRSF" id="PIRSF005518">
    <property type="entry name" value="MtrB"/>
    <property type="match status" value="1"/>
</dbReference>
<feature type="chain" id="PRO_0000147519" description="Tetrahydromethanopterin S-methyltransferase subunit B">
    <location>
        <begin position="1"/>
        <end position="100"/>
    </location>
</feature>
<feature type="transmembrane region" description="Helical" evidence="1">
    <location>
        <begin position="80"/>
        <end position="100"/>
    </location>
</feature>
<proteinExistence type="evidence at protein level"/>
<sequence length="100" mass="10722">MEMLPLVKIAPEYNLTLDPSTGMIGAALGREVIILSMDEINEQIAALEATADDLINSLDPTTIPEGSYPGREGVYLTAGKLTNIVYGFILGLIILFALLL</sequence>
<keyword id="KW-0002">3D-structure</keyword>
<keyword id="KW-1003">Cell membrane</keyword>
<keyword id="KW-0903">Direct protein sequencing</keyword>
<keyword id="KW-0472">Membrane</keyword>
<keyword id="KW-0484">Methanogenesis</keyword>
<keyword id="KW-0489">Methyltransferase</keyword>
<keyword id="KW-0554">One-carbon metabolism</keyword>
<keyword id="KW-0808">Transferase</keyword>
<keyword id="KW-1278">Translocase</keyword>
<keyword id="KW-0812">Transmembrane</keyword>
<keyword id="KW-1133">Transmembrane helix</keyword>
<gene>
    <name evidence="3" type="primary">mtrB</name>
    <name type="ordered locus">MTBMA_c15440</name>
</gene>
<comment type="function">
    <text evidence="2 6">Part of a complex that catalyzes the formation of methyl-coenzyme M and tetrahydromethanopterin from coenzyme M and methyl-tetrahydromethanopterin. This is an energy-conserving, sodium-ion translocating step.</text>
</comment>
<comment type="catalytic activity">
    <reaction evidence="6">
        <text>5-methyl-5,6,7,8-tetrahydromethanopterin + coenzyme M + 2 Na(+)(in) = 5,6,7,8-tetrahydromethanopterin + methyl-coenzyme M + 2 Na(+)(out)</text>
        <dbReference type="Rhea" id="RHEA:53492"/>
        <dbReference type="ChEBI" id="CHEBI:29101"/>
        <dbReference type="ChEBI" id="CHEBI:58103"/>
        <dbReference type="ChEBI" id="CHEBI:58116"/>
        <dbReference type="ChEBI" id="CHEBI:58286"/>
        <dbReference type="ChEBI" id="CHEBI:58319"/>
        <dbReference type="EC" id="7.2.1.4"/>
    </reaction>
</comment>
<comment type="biophysicochemical properties">
    <kinetics>
        <KM evidence="6">260 uM for 5-methyl-5,6,7,8-tetrahydromethanopterin</KM>
        <KM evidence="6">60 uM for coenzyme M</KM>
        <Vmax evidence="6">11.6 umol/min/mg enzyme</Vmax>
        <text evidence="6">From other experiments a much lower Km for 5-methyl-5,6,7,8-tetrahydromethanopterin is estimated.</text>
    </kinetics>
</comment>
<comment type="pathway">
    <text>One-carbon metabolism; methanogenesis from CO(2); methyl-coenzyme M from 5,10-methylene-5,6,7,8-tetrahydromethanopterin: step 2/2.</text>
</comment>
<comment type="subunit">
    <text evidence="2">The complex is composed of 8 subunits; MtrA, MtrB, MtrC, MtrD, MtrE, MtrF, MtrG and MtrH.</text>
</comment>
<comment type="subcellular location">
    <subcellularLocation>
        <location evidence="4">Cell membrane</location>
        <topology evidence="4">Single-pass membrane protein</topology>
    </subcellularLocation>
</comment>
<comment type="induction">
    <text evidence="5">Part of the probable mtrEDCBAFGH operon.</text>
</comment>
<comment type="similarity">
    <text evidence="4">Belongs to the MtrB family.</text>
</comment>